<protein>
    <recommendedName>
        <fullName evidence="1">5-oxoprolinase subunit A</fullName>
        <shortName evidence="1">5-OPase subunit A</shortName>
        <ecNumber evidence="1">3.5.2.9</ecNumber>
    </recommendedName>
    <alternativeName>
        <fullName evidence="1">5-oxoprolinase (ATP-hydrolyzing) subunit A</fullName>
    </alternativeName>
</protein>
<feature type="chain" id="PRO_1000045194" description="5-oxoprolinase subunit A">
    <location>
        <begin position="1"/>
        <end position="254"/>
    </location>
</feature>
<keyword id="KW-0067">ATP-binding</keyword>
<keyword id="KW-0378">Hydrolase</keyword>
<keyword id="KW-0547">Nucleotide-binding</keyword>
<dbReference type="EC" id="3.5.2.9" evidence="1"/>
<dbReference type="EMBL" id="CP000614">
    <property type="protein sequence ID" value="ABO56115.1"/>
    <property type="molecule type" value="Genomic_DNA"/>
</dbReference>
<dbReference type="SMR" id="A4JIL2"/>
<dbReference type="KEGG" id="bvi:Bcep1808_3124"/>
<dbReference type="eggNOG" id="COG1540">
    <property type="taxonomic scope" value="Bacteria"/>
</dbReference>
<dbReference type="HOGENOM" id="CLU_069535_0_0_4"/>
<dbReference type="Proteomes" id="UP000002287">
    <property type="component" value="Chromosome 1"/>
</dbReference>
<dbReference type="GO" id="GO:0017168">
    <property type="term" value="F:5-oxoprolinase (ATP-hydrolyzing) activity"/>
    <property type="evidence" value="ECO:0007669"/>
    <property type="project" value="UniProtKB-UniRule"/>
</dbReference>
<dbReference type="GO" id="GO:0005524">
    <property type="term" value="F:ATP binding"/>
    <property type="evidence" value="ECO:0007669"/>
    <property type="project" value="UniProtKB-UniRule"/>
</dbReference>
<dbReference type="GO" id="GO:0005975">
    <property type="term" value="P:carbohydrate metabolic process"/>
    <property type="evidence" value="ECO:0007669"/>
    <property type="project" value="InterPro"/>
</dbReference>
<dbReference type="CDD" id="cd10800">
    <property type="entry name" value="LamB_YcsF_YbgL_like"/>
    <property type="match status" value="1"/>
</dbReference>
<dbReference type="Gene3D" id="3.20.20.370">
    <property type="entry name" value="Glycoside hydrolase/deacetylase"/>
    <property type="match status" value="1"/>
</dbReference>
<dbReference type="HAMAP" id="MF_00691">
    <property type="entry name" value="PxpA"/>
    <property type="match status" value="1"/>
</dbReference>
<dbReference type="InterPro" id="IPR011330">
    <property type="entry name" value="Glyco_hydro/deAcase_b/a-brl"/>
</dbReference>
<dbReference type="InterPro" id="IPR005501">
    <property type="entry name" value="LamB/YcsF/PxpA-like"/>
</dbReference>
<dbReference type="NCBIfam" id="NF003812">
    <property type="entry name" value="PRK05406.1-1"/>
    <property type="match status" value="1"/>
</dbReference>
<dbReference type="NCBIfam" id="NF003814">
    <property type="entry name" value="PRK05406.1-3"/>
    <property type="match status" value="1"/>
</dbReference>
<dbReference type="NCBIfam" id="NF003815">
    <property type="entry name" value="PRK05406.1-4"/>
    <property type="match status" value="1"/>
</dbReference>
<dbReference type="NCBIfam" id="NF003816">
    <property type="entry name" value="PRK05406.1-5"/>
    <property type="match status" value="1"/>
</dbReference>
<dbReference type="PANTHER" id="PTHR30292:SF0">
    <property type="entry name" value="5-OXOPROLINASE SUBUNIT A"/>
    <property type="match status" value="1"/>
</dbReference>
<dbReference type="PANTHER" id="PTHR30292">
    <property type="entry name" value="UNCHARACTERIZED PROTEIN YBGL-RELATED"/>
    <property type="match status" value="1"/>
</dbReference>
<dbReference type="Pfam" id="PF03746">
    <property type="entry name" value="LamB_YcsF"/>
    <property type="match status" value="1"/>
</dbReference>
<dbReference type="SUPFAM" id="SSF88713">
    <property type="entry name" value="Glycoside hydrolase/deacetylase"/>
    <property type="match status" value="1"/>
</dbReference>
<accession>A4JIL2</accession>
<gene>
    <name evidence="1" type="primary">pxpA</name>
    <name type="ordered locus">Bcep1808_3124</name>
</gene>
<evidence type="ECO:0000255" key="1">
    <source>
        <dbReference type="HAMAP-Rule" id="MF_00691"/>
    </source>
</evidence>
<comment type="function">
    <text evidence="1">Catalyzes the cleavage of 5-oxoproline to form L-glutamate coupled to the hydrolysis of ATP to ADP and inorganic phosphate.</text>
</comment>
<comment type="catalytic activity">
    <reaction evidence="1">
        <text>5-oxo-L-proline + ATP + 2 H2O = L-glutamate + ADP + phosphate + H(+)</text>
        <dbReference type="Rhea" id="RHEA:10348"/>
        <dbReference type="ChEBI" id="CHEBI:15377"/>
        <dbReference type="ChEBI" id="CHEBI:15378"/>
        <dbReference type="ChEBI" id="CHEBI:29985"/>
        <dbReference type="ChEBI" id="CHEBI:30616"/>
        <dbReference type="ChEBI" id="CHEBI:43474"/>
        <dbReference type="ChEBI" id="CHEBI:58402"/>
        <dbReference type="ChEBI" id="CHEBI:456216"/>
        <dbReference type="EC" id="3.5.2.9"/>
    </reaction>
</comment>
<comment type="subunit">
    <text evidence="1">Forms a complex composed of PxpA, PxpB and PxpC.</text>
</comment>
<comment type="similarity">
    <text evidence="1">Belongs to the LamB/PxpA family.</text>
</comment>
<sequence>MEIDLNADLGEGCGSDEALLDLVTSANIACGWHAGGANAMRDCVRWAVQKGVSIGAHPSFHDPENFGRKEMQLPPGDIYAGVLYQLGALSAIAQAEGGRIAHVKPHGALYNQAARDPTIADAVVSAIHDFDPSLSVFGLANSVFVAAARHAGLVAIEEVFADRGYRADGTLVPRSQPGALIDDEDAVLARTLDMVRERQVRAVTGEWVPLNAQTVCLHGDGPHALAFAKRIRAALETAGIDVIAPGALQAGEDA</sequence>
<proteinExistence type="inferred from homology"/>
<reference key="1">
    <citation type="submission" date="2007-03" db="EMBL/GenBank/DDBJ databases">
        <title>Complete sequence of chromosome 1 of Burkholderia vietnamiensis G4.</title>
        <authorList>
            <consortium name="US DOE Joint Genome Institute"/>
            <person name="Copeland A."/>
            <person name="Lucas S."/>
            <person name="Lapidus A."/>
            <person name="Barry K."/>
            <person name="Detter J.C."/>
            <person name="Glavina del Rio T."/>
            <person name="Hammon N."/>
            <person name="Israni S."/>
            <person name="Dalin E."/>
            <person name="Tice H."/>
            <person name="Pitluck S."/>
            <person name="Chain P."/>
            <person name="Malfatti S."/>
            <person name="Shin M."/>
            <person name="Vergez L."/>
            <person name="Schmutz J."/>
            <person name="Larimer F."/>
            <person name="Land M."/>
            <person name="Hauser L."/>
            <person name="Kyrpides N."/>
            <person name="Tiedje J."/>
            <person name="Richardson P."/>
        </authorList>
    </citation>
    <scope>NUCLEOTIDE SEQUENCE [LARGE SCALE GENOMIC DNA]</scope>
    <source>
        <strain>G4 / LMG 22486</strain>
    </source>
</reference>
<name>PXPA_BURVG</name>
<organism>
    <name type="scientific">Burkholderia vietnamiensis (strain G4 / LMG 22486)</name>
    <name type="common">Burkholderia cepacia (strain R1808)</name>
    <dbReference type="NCBI Taxonomy" id="269482"/>
    <lineage>
        <taxon>Bacteria</taxon>
        <taxon>Pseudomonadati</taxon>
        <taxon>Pseudomonadota</taxon>
        <taxon>Betaproteobacteria</taxon>
        <taxon>Burkholderiales</taxon>
        <taxon>Burkholderiaceae</taxon>
        <taxon>Burkholderia</taxon>
        <taxon>Burkholderia cepacia complex</taxon>
    </lineage>
</organism>